<gene>
    <name type="ORF">ORF2</name>
</gene>
<dbReference type="EMBL" id="AB041957">
    <property type="protein sequence ID" value="BAB19307.1"/>
    <property type="molecule type" value="Genomic_DNA"/>
</dbReference>
<dbReference type="RefSeq" id="YP_003587827.1">
    <property type="nucleotide sequence ID" value="NC_014069.1"/>
</dbReference>
<dbReference type="KEGG" id="vg:9086571"/>
<dbReference type="OrthoDB" id="27758at10239"/>
<dbReference type="Proteomes" id="UP000007553">
    <property type="component" value="Genome"/>
</dbReference>
<dbReference type="InterPro" id="IPR004118">
    <property type="entry name" value="HEV_TT_vir_Orf2/Gyrovir_Vp2_N"/>
</dbReference>
<dbReference type="Pfam" id="PF02957">
    <property type="entry name" value="TT_ORF2-like"/>
    <property type="match status" value="1"/>
</dbReference>
<sequence length="152" mass="15820">MHFSKLSRRKKGKVPLPPLPTAPLPPHRPRMSGTWCPPVHNVPGLERNWYESCLRSHAAFCGCGDFVSHLNNLANRLGRPPAPRPPGAPQPPAVRALPALPAPEDRFPNPPGWPGPGGGAAGAGAAAGRDGGDGGDAEPGDEDLDALFAADE</sequence>
<organismHost>
    <name type="scientific">Pan troglodytes</name>
    <name type="common">Chimpanzee</name>
    <dbReference type="NCBI Taxonomy" id="9598"/>
</organismHost>
<reference key="1">
    <citation type="journal article" date="2000" name="Virology">
        <title>Species-specific TT viruses in humans and nonhuman primates and their phylogenetic relatedness.</title>
        <authorList>
            <person name="Okamoto H."/>
            <person name="Nishizawa T."/>
            <person name="Tawara A."/>
            <person name="Peng Y."/>
            <person name="Takahashi M."/>
            <person name="Kishimoto J."/>
            <person name="Tanaka T."/>
            <person name="Miyakawa Y."/>
            <person name="Mayumi M."/>
        </authorList>
    </citation>
    <scope>NUCLEOTIDE SEQUENCE [GENOMIC DNA]</scope>
</reference>
<reference key="2">
    <citation type="journal article" date="2007" name="Rev. Med. Virol.">
        <title>Torque teno virus (TTV): current status.</title>
        <authorList>
            <person name="Hino S."/>
            <person name="Miyata H."/>
        </authorList>
    </citation>
    <scope>REVIEW</scope>
</reference>
<keyword id="KW-1185">Reference proteome</keyword>
<evidence type="ECO:0000256" key="1">
    <source>
        <dbReference type="SAM" id="MobiDB-lite"/>
    </source>
</evidence>
<accession>Q9DUD0</accession>
<feature type="chain" id="PRO_0000315347" description="Uncharacterized ORF2 protein">
    <location>
        <begin position="1"/>
        <end position="152"/>
    </location>
</feature>
<feature type="region of interest" description="Disordered" evidence="1">
    <location>
        <begin position="1"/>
        <end position="28"/>
    </location>
</feature>
<feature type="region of interest" description="Disordered" evidence="1">
    <location>
        <begin position="75"/>
        <end position="152"/>
    </location>
</feature>
<feature type="compositionally biased region" description="Basic residues" evidence="1">
    <location>
        <begin position="1"/>
        <end position="13"/>
    </location>
</feature>
<feature type="compositionally biased region" description="Pro residues" evidence="1">
    <location>
        <begin position="15"/>
        <end position="26"/>
    </location>
</feature>
<feature type="compositionally biased region" description="Pro residues" evidence="1">
    <location>
        <begin position="80"/>
        <end position="92"/>
    </location>
</feature>
<feature type="compositionally biased region" description="Acidic residues" evidence="1">
    <location>
        <begin position="133"/>
        <end position="152"/>
    </location>
</feature>
<organism>
    <name type="scientific">Torque teno virus (isolate Chimpanzee/Japan/Pt-TTV6/2000)</name>
    <name type="common">TTV</name>
    <dbReference type="NCBI Taxonomy" id="687343"/>
    <lineage>
        <taxon>Viruses</taxon>
        <taxon>Viruses incertae sedis</taxon>
        <taxon>Anelloviridae</taxon>
        <taxon>Alphatorquevirus</taxon>
        <taxon>Alphatorquevirus homin4</taxon>
    </lineage>
</organism>
<name>ORF2_TTVV8</name>
<protein>
    <recommendedName>
        <fullName>Uncharacterized ORF2 protein</fullName>
    </recommendedName>
</protein>
<proteinExistence type="predicted"/>